<evidence type="ECO:0000250" key="1">
    <source>
        <dbReference type="UniProtKB" id="Q5JTW2"/>
    </source>
</evidence>
<evidence type="ECO:0000256" key="2">
    <source>
        <dbReference type="SAM" id="MobiDB-lite"/>
    </source>
</evidence>
<evidence type="ECO:0000305" key="3"/>
<name>CEP78_DROME</name>
<accession>Q9VFH6</accession>
<accession>Q8MZ87</accession>
<dbReference type="EMBL" id="AE014297">
    <property type="protein sequence ID" value="AAF55081.2"/>
    <property type="molecule type" value="Genomic_DNA"/>
</dbReference>
<dbReference type="EMBL" id="AY113304">
    <property type="protein sequence ID" value="AAM29309.1"/>
    <property type="molecule type" value="mRNA"/>
</dbReference>
<dbReference type="RefSeq" id="NP_650378.1">
    <property type="nucleotide sequence ID" value="NM_142121.2"/>
</dbReference>
<dbReference type="SMR" id="Q9VFH6"/>
<dbReference type="BioGRID" id="66849">
    <property type="interactions" value="4"/>
</dbReference>
<dbReference type="FunCoup" id="Q9VFH6">
    <property type="interactions" value="1"/>
</dbReference>
<dbReference type="IntAct" id="Q9VFH6">
    <property type="interactions" value="3"/>
</dbReference>
<dbReference type="STRING" id="7227.FBpp0082435"/>
<dbReference type="PaxDb" id="7227-FBpp0082435"/>
<dbReference type="DNASU" id="41775"/>
<dbReference type="EnsemblMetazoa" id="FBtr0082976">
    <property type="protein sequence ID" value="FBpp0082435"/>
    <property type="gene ID" value="FBgn0038248"/>
</dbReference>
<dbReference type="GeneID" id="41775"/>
<dbReference type="KEGG" id="dme:Dmel_CG7886"/>
<dbReference type="UCSC" id="CG7886-RA">
    <property type="organism name" value="d. melanogaster"/>
</dbReference>
<dbReference type="AGR" id="FB:FBgn0038248"/>
<dbReference type="FlyBase" id="FBgn0038248">
    <property type="gene designation" value="CG7886"/>
</dbReference>
<dbReference type="VEuPathDB" id="VectorBase:FBgn0038248"/>
<dbReference type="eggNOG" id="KOG4308">
    <property type="taxonomic scope" value="Eukaryota"/>
</dbReference>
<dbReference type="GeneTree" id="ENSGT00390000013287"/>
<dbReference type="HOGENOM" id="CLU_011224_1_0_1"/>
<dbReference type="InParanoid" id="Q9VFH6"/>
<dbReference type="OMA" id="GDMHMES"/>
<dbReference type="OrthoDB" id="78308at2759"/>
<dbReference type="PhylomeDB" id="Q9VFH6"/>
<dbReference type="BioGRID-ORCS" id="41775">
    <property type="hits" value="0 hits in 1 CRISPR screen"/>
</dbReference>
<dbReference type="GenomeRNAi" id="41775"/>
<dbReference type="PRO" id="PR:Q9VFH6"/>
<dbReference type="Proteomes" id="UP000000803">
    <property type="component" value="Chromosome 3R"/>
</dbReference>
<dbReference type="Bgee" id="FBgn0038248">
    <property type="expression patterns" value="Expressed in early elongation stage spermatid (Drosophila) in testis and 26 other cell types or tissues"/>
</dbReference>
<dbReference type="ExpressionAtlas" id="Q9VFH6">
    <property type="expression patterns" value="baseline and differential"/>
</dbReference>
<dbReference type="GO" id="GO:0005814">
    <property type="term" value="C:centriole"/>
    <property type="evidence" value="ECO:0007669"/>
    <property type="project" value="UniProtKB-SubCell"/>
</dbReference>
<dbReference type="GO" id="GO:0005813">
    <property type="term" value="C:centrosome"/>
    <property type="evidence" value="ECO:0000250"/>
    <property type="project" value="FlyBase"/>
</dbReference>
<dbReference type="GO" id="GO:0036064">
    <property type="term" value="C:ciliary basal body"/>
    <property type="evidence" value="ECO:0000250"/>
    <property type="project" value="UniProtKB"/>
</dbReference>
<dbReference type="GO" id="GO:0005737">
    <property type="term" value="C:cytoplasm"/>
    <property type="evidence" value="ECO:0007669"/>
    <property type="project" value="UniProtKB-KW"/>
</dbReference>
<dbReference type="GO" id="GO:0044782">
    <property type="term" value="P:cilium organization"/>
    <property type="evidence" value="ECO:0000250"/>
    <property type="project" value="UniProtKB"/>
</dbReference>
<dbReference type="FunFam" id="3.80.10.10:FF:001226">
    <property type="entry name" value="Protein Cep78 homolog"/>
    <property type="match status" value="1"/>
</dbReference>
<dbReference type="FunFam" id="3.80.10.10:FF:000933">
    <property type="entry name" value="RNI-like superfamily protein"/>
    <property type="match status" value="1"/>
</dbReference>
<dbReference type="Gene3D" id="3.80.10.10">
    <property type="entry name" value="Ribonuclease Inhibitor"/>
    <property type="match status" value="2"/>
</dbReference>
<dbReference type="InterPro" id="IPR026212">
    <property type="entry name" value="Cep78"/>
</dbReference>
<dbReference type="InterPro" id="IPR032675">
    <property type="entry name" value="LRR_dom_sf"/>
</dbReference>
<dbReference type="PANTHER" id="PTHR24110">
    <property type="entry name" value="CENTROSOMAL PROTEIN OF 78 KDA"/>
    <property type="match status" value="1"/>
</dbReference>
<dbReference type="PANTHER" id="PTHR24110:SF3">
    <property type="entry name" value="CENTROSOMAL PROTEIN OF 78 KDA"/>
    <property type="match status" value="1"/>
</dbReference>
<dbReference type="PRINTS" id="PR02062">
    <property type="entry name" value="CENTROSOME78"/>
</dbReference>
<dbReference type="SMART" id="SM00368">
    <property type="entry name" value="LRR_RI"/>
    <property type="match status" value="4"/>
</dbReference>
<dbReference type="SUPFAM" id="SSF52047">
    <property type="entry name" value="RNI-like"/>
    <property type="match status" value="1"/>
</dbReference>
<gene>
    <name type="ORF">CG7886</name>
</gene>
<proteinExistence type="evidence at transcript level"/>
<sequence length="818" mass="92782">MSVSRVTMMRKGHSGEVARKPNTVVVSVPPLVKKSSKSRSFHFRYLELCRAKNLTPVPEIRSKSNATTTFLELCGDKLAVSDWQLLTEALHYDLVLQQLVVRLRRTYPQTNIDPIDTEKRARLFRQRPVIYTRFIFNSLVQAIANCVSSNKNLSVLKLEGLPLQDGYIETIAKALADNECLESVSFRKSNIGDKGCEVVCNTAKYLNRIEVFDLSECGLTSKGAEHVADMLKMQKITRFTEGWEKSLRYRSVDVNTIGGLRTVLLADNPEIGDVGIRWITEVLKEDAWIKKIDMEGCGLTDIGANLILDCLELNTAITEFNVRNNEGISKFLQRSIHDRLGCLPEEKQEPEYDLSCVNGLQSLPKNKKVTVSQLLSHTKALEEQLSFERTLRKKAEKLNEKLSHQLMRPDSNHMVQEKAMEGGSQTNISREYVARNDVMPEVIKNSQSYRQSHFNRLVNSAATSPEVTPRSEIVTLRKEQQLQRQQPPPMEVKHLSLEQQIRNLRDVQKKVDLDVEEEEEEEEEEQQAEESQSESEPQNEEQQHYEQQMQVQRKHLQVRKVRSEIKYVENNPKEAAKKNRESKSDHEFANERDFKLNPSVQFETDIGDNVMVNPGHRYEGGGGDTAYVYNYEHEQQQQPVKRGYEHGYVVGVGDGSHRRQRQSQLVEALVQKRVPGASDGHVAQFVSNLERQANAGKTGKKRLKPRPEDDLQVPVGDMHMESSYMSRSEELSSTDVTLENSDYETEATDSTLLSSSKYSSMHVFVRRKQSESMSLTEEAGDGDAGGGGGSGDFGDQNVISPANVYMSLQLQKQREQSA</sequence>
<reference key="1">
    <citation type="journal article" date="2000" name="Science">
        <title>The genome sequence of Drosophila melanogaster.</title>
        <authorList>
            <person name="Adams M.D."/>
            <person name="Celniker S.E."/>
            <person name="Holt R.A."/>
            <person name="Evans C.A."/>
            <person name="Gocayne J.D."/>
            <person name="Amanatides P.G."/>
            <person name="Scherer S.E."/>
            <person name="Li P.W."/>
            <person name="Hoskins R.A."/>
            <person name="Galle R.F."/>
            <person name="George R.A."/>
            <person name="Lewis S.E."/>
            <person name="Richards S."/>
            <person name="Ashburner M."/>
            <person name="Henderson S.N."/>
            <person name="Sutton G.G."/>
            <person name="Wortman J.R."/>
            <person name="Yandell M.D."/>
            <person name="Zhang Q."/>
            <person name="Chen L.X."/>
            <person name="Brandon R.C."/>
            <person name="Rogers Y.-H.C."/>
            <person name="Blazej R.G."/>
            <person name="Champe M."/>
            <person name="Pfeiffer B.D."/>
            <person name="Wan K.H."/>
            <person name="Doyle C."/>
            <person name="Baxter E.G."/>
            <person name="Helt G."/>
            <person name="Nelson C.R."/>
            <person name="Miklos G.L.G."/>
            <person name="Abril J.F."/>
            <person name="Agbayani A."/>
            <person name="An H.-J."/>
            <person name="Andrews-Pfannkoch C."/>
            <person name="Baldwin D."/>
            <person name="Ballew R.M."/>
            <person name="Basu A."/>
            <person name="Baxendale J."/>
            <person name="Bayraktaroglu L."/>
            <person name="Beasley E.M."/>
            <person name="Beeson K.Y."/>
            <person name="Benos P.V."/>
            <person name="Berman B.P."/>
            <person name="Bhandari D."/>
            <person name="Bolshakov S."/>
            <person name="Borkova D."/>
            <person name="Botchan M.R."/>
            <person name="Bouck J."/>
            <person name="Brokstein P."/>
            <person name="Brottier P."/>
            <person name="Burtis K.C."/>
            <person name="Busam D.A."/>
            <person name="Butler H."/>
            <person name="Cadieu E."/>
            <person name="Center A."/>
            <person name="Chandra I."/>
            <person name="Cherry J.M."/>
            <person name="Cawley S."/>
            <person name="Dahlke C."/>
            <person name="Davenport L.B."/>
            <person name="Davies P."/>
            <person name="de Pablos B."/>
            <person name="Delcher A."/>
            <person name="Deng Z."/>
            <person name="Mays A.D."/>
            <person name="Dew I."/>
            <person name="Dietz S.M."/>
            <person name="Dodson K."/>
            <person name="Doup L.E."/>
            <person name="Downes M."/>
            <person name="Dugan-Rocha S."/>
            <person name="Dunkov B.C."/>
            <person name="Dunn P."/>
            <person name="Durbin K.J."/>
            <person name="Evangelista C.C."/>
            <person name="Ferraz C."/>
            <person name="Ferriera S."/>
            <person name="Fleischmann W."/>
            <person name="Fosler C."/>
            <person name="Gabrielian A.E."/>
            <person name="Garg N.S."/>
            <person name="Gelbart W.M."/>
            <person name="Glasser K."/>
            <person name="Glodek A."/>
            <person name="Gong F."/>
            <person name="Gorrell J.H."/>
            <person name="Gu Z."/>
            <person name="Guan P."/>
            <person name="Harris M."/>
            <person name="Harris N.L."/>
            <person name="Harvey D.A."/>
            <person name="Heiman T.J."/>
            <person name="Hernandez J.R."/>
            <person name="Houck J."/>
            <person name="Hostin D."/>
            <person name="Houston K.A."/>
            <person name="Howland T.J."/>
            <person name="Wei M.-H."/>
            <person name="Ibegwam C."/>
            <person name="Jalali M."/>
            <person name="Kalush F."/>
            <person name="Karpen G.H."/>
            <person name="Ke Z."/>
            <person name="Kennison J.A."/>
            <person name="Ketchum K.A."/>
            <person name="Kimmel B.E."/>
            <person name="Kodira C.D."/>
            <person name="Kraft C.L."/>
            <person name="Kravitz S."/>
            <person name="Kulp D."/>
            <person name="Lai Z."/>
            <person name="Lasko P."/>
            <person name="Lei Y."/>
            <person name="Levitsky A.A."/>
            <person name="Li J.H."/>
            <person name="Li Z."/>
            <person name="Liang Y."/>
            <person name="Lin X."/>
            <person name="Liu X."/>
            <person name="Mattei B."/>
            <person name="McIntosh T.C."/>
            <person name="McLeod M.P."/>
            <person name="McPherson D."/>
            <person name="Merkulov G."/>
            <person name="Milshina N.V."/>
            <person name="Mobarry C."/>
            <person name="Morris J."/>
            <person name="Moshrefi A."/>
            <person name="Mount S.M."/>
            <person name="Moy M."/>
            <person name="Murphy B."/>
            <person name="Murphy L."/>
            <person name="Muzny D.M."/>
            <person name="Nelson D.L."/>
            <person name="Nelson D.R."/>
            <person name="Nelson K.A."/>
            <person name="Nixon K."/>
            <person name="Nusskern D.R."/>
            <person name="Pacleb J.M."/>
            <person name="Palazzolo M."/>
            <person name="Pittman G.S."/>
            <person name="Pan S."/>
            <person name="Pollard J."/>
            <person name="Puri V."/>
            <person name="Reese M.G."/>
            <person name="Reinert K."/>
            <person name="Remington K."/>
            <person name="Saunders R.D.C."/>
            <person name="Scheeler F."/>
            <person name="Shen H."/>
            <person name="Shue B.C."/>
            <person name="Siden-Kiamos I."/>
            <person name="Simpson M."/>
            <person name="Skupski M.P."/>
            <person name="Smith T.J."/>
            <person name="Spier E."/>
            <person name="Spradling A.C."/>
            <person name="Stapleton M."/>
            <person name="Strong R."/>
            <person name="Sun E."/>
            <person name="Svirskas R."/>
            <person name="Tector C."/>
            <person name="Turner R."/>
            <person name="Venter E."/>
            <person name="Wang A.H."/>
            <person name="Wang X."/>
            <person name="Wang Z.-Y."/>
            <person name="Wassarman D.A."/>
            <person name="Weinstock G.M."/>
            <person name="Weissenbach J."/>
            <person name="Williams S.M."/>
            <person name="Woodage T."/>
            <person name="Worley K.C."/>
            <person name="Wu D."/>
            <person name="Yang S."/>
            <person name="Yao Q.A."/>
            <person name="Ye J."/>
            <person name="Yeh R.-F."/>
            <person name="Zaveri J.S."/>
            <person name="Zhan M."/>
            <person name="Zhang G."/>
            <person name="Zhao Q."/>
            <person name="Zheng L."/>
            <person name="Zheng X.H."/>
            <person name="Zhong F.N."/>
            <person name="Zhong W."/>
            <person name="Zhou X."/>
            <person name="Zhu S.C."/>
            <person name="Zhu X."/>
            <person name="Smith H.O."/>
            <person name="Gibbs R.A."/>
            <person name="Myers E.W."/>
            <person name="Rubin G.M."/>
            <person name="Venter J.C."/>
        </authorList>
    </citation>
    <scope>NUCLEOTIDE SEQUENCE [LARGE SCALE GENOMIC DNA]</scope>
    <source>
        <strain>Berkeley</strain>
    </source>
</reference>
<reference key="2">
    <citation type="journal article" date="2002" name="Genome Biol.">
        <title>Annotation of the Drosophila melanogaster euchromatic genome: a systematic review.</title>
        <authorList>
            <person name="Misra S."/>
            <person name="Crosby M.A."/>
            <person name="Mungall C.J."/>
            <person name="Matthews B.B."/>
            <person name="Campbell K.S."/>
            <person name="Hradecky P."/>
            <person name="Huang Y."/>
            <person name="Kaminker J.S."/>
            <person name="Millburn G.H."/>
            <person name="Prochnik S.E."/>
            <person name="Smith C.D."/>
            <person name="Tupy J.L."/>
            <person name="Whitfield E.J."/>
            <person name="Bayraktaroglu L."/>
            <person name="Berman B.P."/>
            <person name="Bettencourt B.R."/>
            <person name="Celniker S.E."/>
            <person name="de Grey A.D.N.J."/>
            <person name="Drysdale R.A."/>
            <person name="Harris N.L."/>
            <person name="Richter J."/>
            <person name="Russo S."/>
            <person name="Schroeder A.J."/>
            <person name="Shu S.Q."/>
            <person name="Stapleton M."/>
            <person name="Yamada C."/>
            <person name="Ashburner M."/>
            <person name="Gelbart W.M."/>
            <person name="Rubin G.M."/>
            <person name="Lewis S.E."/>
        </authorList>
    </citation>
    <scope>GENOME REANNOTATION</scope>
    <source>
        <strain>Berkeley</strain>
    </source>
</reference>
<reference key="3">
    <citation type="journal article" date="2002" name="Genome Biol.">
        <title>A Drosophila full-length cDNA resource.</title>
        <authorList>
            <person name="Stapleton M."/>
            <person name="Carlson J.W."/>
            <person name="Brokstein P."/>
            <person name="Yu C."/>
            <person name="Champe M."/>
            <person name="George R.A."/>
            <person name="Guarin H."/>
            <person name="Kronmiller B."/>
            <person name="Pacleb J.M."/>
            <person name="Park S."/>
            <person name="Wan K.H."/>
            <person name="Rubin G.M."/>
            <person name="Celniker S.E."/>
        </authorList>
    </citation>
    <scope>NUCLEOTIDE SEQUENCE [LARGE SCALE MRNA]</scope>
    <source>
        <strain>Berkeley</strain>
        <tissue>Testis</tissue>
    </source>
</reference>
<keyword id="KW-0966">Cell projection</keyword>
<keyword id="KW-0969">Cilium</keyword>
<keyword id="KW-0970">Cilium biogenesis/degradation</keyword>
<keyword id="KW-0963">Cytoplasm</keyword>
<keyword id="KW-0206">Cytoskeleton</keyword>
<keyword id="KW-1185">Reference proteome</keyword>
<organism>
    <name type="scientific">Drosophila melanogaster</name>
    <name type="common">Fruit fly</name>
    <dbReference type="NCBI Taxonomy" id="7227"/>
    <lineage>
        <taxon>Eukaryota</taxon>
        <taxon>Metazoa</taxon>
        <taxon>Ecdysozoa</taxon>
        <taxon>Arthropoda</taxon>
        <taxon>Hexapoda</taxon>
        <taxon>Insecta</taxon>
        <taxon>Pterygota</taxon>
        <taxon>Neoptera</taxon>
        <taxon>Endopterygota</taxon>
        <taxon>Diptera</taxon>
        <taxon>Brachycera</taxon>
        <taxon>Muscomorpha</taxon>
        <taxon>Ephydroidea</taxon>
        <taxon>Drosophilidae</taxon>
        <taxon>Drosophila</taxon>
        <taxon>Sophophora</taxon>
    </lineage>
</organism>
<comment type="function">
    <text evidence="1">May play a role in cilium biogenesis.</text>
</comment>
<comment type="subcellular location">
    <subcellularLocation>
        <location evidence="1">Cytoplasm</location>
        <location evidence="1">Cytoskeleton</location>
        <location evidence="1">Microtubule organizing center</location>
        <location evidence="1">Centrosome</location>
    </subcellularLocation>
    <subcellularLocation>
        <location evidence="1">Cytoplasm</location>
        <location evidence="1">Cytoskeleton</location>
        <location evidence="1">Microtubule organizing center</location>
        <location evidence="1">Centrosome</location>
        <location evidence="1">Centriole</location>
    </subcellularLocation>
    <subcellularLocation>
        <location evidence="1">Cytoplasm</location>
        <location evidence="1">Cytoskeleton</location>
        <location evidence="1">Cilium basal body</location>
    </subcellularLocation>
</comment>
<comment type="similarity">
    <text evidence="3">Belongs to the CEP78 family.</text>
</comment>
<protein>
    <recommendedName>
        <fullName>Protein Cep78 homolog</fullName>
    </recommendedName>
</protein>
<feature type="chain" id="PRO_0000291955" description="Protein Cep78 homolog">
    <location>
        <begin position="1"/>
        <end position="818"/>
    </location>
</feature>
<feature type="region of interest" description="Disordered" evidence="2">
    <location>
        <begin position="513"/>
        <end position="589"/>
    </location>
</feature>
<feature type="region of interest" description="Disordered" evidence="2">
    <location>
        <begin position="691"/>
        <end position="748"/>
    </location>
</feature>
<feature type="region of interest" description="Disordered" evidence="2">
    <location>
        <begin position="768"/>
        <end position="798"/>
    </location>
</feature>
<feature type="compositionally biased region" description="Acidic residues" evidence="2">
    <location>
        <begin position="514"/>
        <end position="539"/>
    </location>
</feature>
<feature type="compositionally biased region" description="Basic and acidic residues" evidence="2">
    <location>
        <begin position="561"/>
        <end position="589"/>
    </location>
</feature>
<feature type="compositionally biased region" description="Gly residues" evidence="2">
    <location>
        <begin position="782"/>
        <end position="792"/>
    </location>
</feature>
<feature type="sequence conflict" description="In Ref. 3; AAM29309." evidence="3" ref="3">
    <original>S</original>
    <variation>T</variation>
    <location>
        <position position="183"/>
    </location>
</feature>
<feature type="sequence conflict" description="In Ref. 3; AAM29309." evidence="3" ref="3">
    <original>P</original>
    <variation>L</variation>
    <location>
        <position position="489"/>
    </location>
</feature>
<feature type="sequence conflict" description="In Ref. 3; AAM29309." evidence="3" ref="3">
    <original>V</original>
    <variation>L</variation>
    <location>
        <position position="610"/>
    </location>
</feature>
<feature type="sequence conflict" description="In Ref. 3; AAM29309." evidence="3" ref="3">
    <original>A</original>
    <variation>G</variation>
    <location>
        <position position="626"/>
    </location>
</feature>